<name>DNAA_PSEPU</name>
<feature type="chain" id="PRO_0000114240" description="Chromosomal replication initiator protein DnaA">
    <location>
        <begin position="1"/>
        <end position="506"/>
    </location>
</feature>
<feature type="region of interest" description="Domain I, interacts with DnaA modulators" evidence="1">
    <location>
        <begin position="1"/>
        <end position="87"/>
    </location>
</feature>
<feature type="region of interest" description="Domain II" evidence="1">
    <location>
        <begin position="87"/>
        <end position="169"/>
    </location>
</feature>
<feature type="region of interest" description="Disordered" evidence="2">
    <location>
        <begin position="135"/>
        <end position="154"/>
    </location>
</feature>
<feature type="region of interest" description="Domain III, AAA+ region" evidence="1">
    <location>
        <begin position="170"/>
        <end position="386"/>
    </location>
</feature>
<feature type="region of interest" description="Domain IV, binds dsDNA" evidence="1">
    <location>
        <begin position="387"/>
        <end position="506"/>
    </location>
</feature>
<feature type="compositionally biased region" description="Low complexity" evidence="2">
    <location>
        <begin position="139"/>
        <end position="148"/>
    </location>
</feature>
<feature type="binding site" evidence="1">
    <location>
        <position position="214"/>
    </location>
    <ligand>
        <name>ATP</name>
        <dbReference type="ChEBI" id="CHEBI:30616"/>
    </ligand>
</feature>
<feature type="binding site" evidence="1">
    <location>
        <position position="216"/>
    </location>
    <ligand>
        <name>ATP</name>
        <dbReference type="ChEBI" id="CHEBI:30616"/>
    </ligand>
</feature>
<feature type="binding site" evidence="1">
    <location>
        <position position="217"/>
    </location>
    <ligand>
        <name>ATP</name>
        <dbReference type="ChEBI" id="CHEBI:30616"/>
    </ligand>
</feature>
<feature type="binding site" evidence="1">
    <location>
        <position position="218"/>
    </location>
    <ligand>
        <name>ATP</name>
        <dbReference type="ChEBI" id="CHEBI:30616"/>
    </ligand>
</feature>
<proteinExistence type="inferred from homology"/>
<gene>
    <name evidence="1" type="primary">dnaA</name>
</gene>
<accession>P0A117</accession>
<accession>P13454</accession>
<evidence type="ECO:0000255" key="1">
    <source>
        <dbReference type="HAMAP-Rule" id="MF_00377"/>
    </source>
</evidence>
<evidence type="ECO:0000256" key="2">
    <source>
        <dbReference type="SAM" id="MobiDB-lite"/>
    </source>
</evidence>
<sequence>MSVELWQQCVELLRDELPAQQFNTWIRPLQVEAEGDELRVYAPNRFVLDWVNEKYLGRLLELLGENGSGIAPALSLLIGSRRSSAPRAAPNAPVSAAVAASLAQTQAHKTAPAAAVEPVAVAAAEPVLVETSSRDSFDAMAEPAAAPPSGGGRAEQRTVQVEGALKHTSYLNRTFTFDTFVEGKSNQLARAAAWQVADNPKHGYNPLFLYGGVGLGKTHLMHAVGNHLLKKNPNAKVVYLHSERFVADMVKALQLNAINEFKRFYRSVDALLIDDIQFFARKERSQEEFFHTFNALLEGGQQVILTSDRYPKEIEGLEERLKSRFGWGLTVAVEPPELETRVAILMKKADQAKVELPHDAAFFIAQRIRSNVRELEGALKRVIAHSHFMGRDITIELIRESLKDLLALQDKLVSVDNIQRTVAEYYKIKISDLLSKRRSRSVARPRQVAMALSKELTNHSLPEIGDMFGGRDHTTVLHACRKINELKESDADIREDYKNLLRTLTT</sequence>
<dbReference type="EMBL" id="X14791">
    <property type="protein sequence ID" value="CAA32893.1"/>
    <property type="molecule type" value="Genomic_DNA"/>
</dbReference>
<dbReference type="EMBL" id="M30126">
    <property type="protein sequence ID" value="AAA25918.1"/>
    <property type="molecule type" value="Genomic_DNA"/>
</dbReference>
<dbReference type="PIR" id="JV0001">
    <property type="entry name" value="IQPSP"/>
</dbReference>
<dbReference type="RefSeq" id="WP_010951427.1">
    <property type="nucleotide sequence ID" value="NZ_SPUU01000003.1"/>
</dbReference>
<dbReference type="SMR" id="P0A117"/>
<dbReference type="GeneID" id="83677290"/>
<dbReference type="PATRIC" id="fig|303.175.peg.34"/>
<dbReference type="eggNOG" id="COG0593">
    <property type="taxonomic scope" value="Bacteria"/>
</dbReference>
<dbReference type="GO" id="GO:0005737">
    <property type="term" value="C:cytoplasm"/>
    <property type="evidence" value="ECO:0007669"/>
    <property type="project" value="UniProtKB-SubCell"/>
</dbReference>
<dbReference type="GO" id="GO:0005886">
    <property type="term" value="C:plasma membrane"/>
    <property type="evidence" value="ECO:0007669"/>
    <property type="project" value="TreeGrafter"/>
</dbReference>
<dbReference type="GO" id="GO:0005524">
    <property type="term" value="F:ATP binding"/>
    <property type="evidence" value="ECO:0007669"/>
    <property type="project" value="UniProtKB-UniRule"/>
</dbReference>
<dbReference type="GO" id="GO:0016887">
    <property type="term" value="F:ATP hydrolysis activity"/>
    <property type="evidence" value="ECO:0007669"/>
    <property type="project" value="InterPro"/>
</dbReference>
<dbReference type="GO" id="GO:0003688">
    <property type="term" value="F:DNA replication origin binding"/>
    <property type="evidence" value="ECO:0007669"/>
    <property type="project" value="UniProtKB-UniRule"/>
</dbReference>
<dbReference type="GO" id="GO:0008289">
    <property type="term" value="F:lipid binding"/>
    <property type="evidence" value="ECO:0007669"/>
    <property type="project" value="UniProtKB-KW"/>
</dbReference>
<dbReference type="GO" id="GO:0006270">
    <property type="term" value="P:DNA replication initiation"/>
    <property type="evidence" value="ECO:0007669"/>
    <property type="project" value="UniProtKB-UniRule"/>
</dbReference>
<dbReference type="GO" id="GO:0006275">
    <property type="term" value="P:regulation of DNA replication"/>
    <property type="evidence" value="ECO:0007669"/>
    <property type="project" value="UniProtKB-UniRule"/>
</dbReference>
<dbReference type="CDD" id="cd00009">
    <property type="entry name" value="AAA"/>
    <property type="match status" value="1"/>
</dbReference>
<dbReference type="CDD" id="cd06571">
    <property type="entry name" value="Bac_DnaA_C"/>
    <property type="match status" value="1"/>
</dbReference>
<dbReference type="FunFam" id="1.10.1750.10:FF:000001">
    <property type="entry name" value="Chromosomal replication initiator protein DnaA"/>
    <property type="match status" value="1"/>
</dbReference>
<dbReference type="FunFam" id="1.10.8.60:FF:000003">
    <property type="entry name" value="Chromosomal replication initiator protein DnaA"/>
    <property type="match status" value="1"/>
</dbReference>
<dbReference type="FunFam" id="3.40.50.300:FF:000103">
    <property type="entry name" value="Chromosomal replication initiator protein DnaA"/>
    <property type="match status" value="1"/>
</dbReference>
<dbReference type="Gene3D" id="1.10.1750.10">
    <property type="match status" value="1"/>
</dbReference>
<dbReference type="Gene3D" id="1.10.8.60">
    <property type="match status" value="1"/>
</dbReference>
<dbReference type="Gene3D" id="3.30.300.180">
    <property type="match status" value="1"/>
</dbReference>
<dbReference type="Gene3D" id="3.40.50.300">
    <property type="entry name" value="P-loop containing nucleotide triphosphate hydrolases"/>
    <property type="match status" value="1"/>
</dbReference>
<dbReference type="HAMAP" id="MF_00377">
    <property type="entry name" value="DnaA_bact"/>
    <property type="match status" value="1"/>
</dbReference>
<dbReference type="InterPro" id="IPR003593">
    <property type="entry name" value="AAA+_ATPase"/>
</dbReference>
<dbReference type="InterPro" id="IPR001957">
    <property type="entry name" value="Chromosome_initiator_DnaA"/>
</dbReference>
<dbReference type="InterPro" id="IPR020591">
    <property type="entry name" value="Chromosome_initiator_DnaA-like"/>
</dbReference>
<dbReference type="InterPro" id="IPR018312">
    <property type="entry name" value="Chromosome_initiator_DnaA_CS"/>
</dbReference>
<dbReference type="InterPro" id="IPR013159">
    <property type="entry name" value="DnaA_C"/>
</dbReference>
<dbReference type="InterPro" id="IPR013317">
    <property type="entry name" value="DnaA_dom"/>
</dbReference>
<dbReference type="InterPro" id="IPR024633">
    <property type="entry name" value="DnaA_N_dom"/>
</dbReference>
<dbReference type="InterPro" id="IPR038454">
    <property type="entry name" value="DnaA_N_sf"/>
</dbReference>
<dbReference type="InterPro" id="IPR027417">
    <property type="entry name" value="P-loop_NTPase"/>
</dbReference>
<dbReference type="InterPro" id="IPR010921">
    <property type="entry name" value="Trp_repressor/repl_initiator"/>
</dbReference>
<dbReference type="NCBIfam" id="TIGR00362">
    <property type="entry name" value="DnaA"/>
    <property type="match status" value="1"/>
</dbReference>
<dbReference type="PANTHER" id="PTHR30050">
    <property type="entry name" value="CHROMOSOMAL REPLICATION INITIATOR PROTEIN DNAA"/>
    <property type="match status" value="1"/>
</dbReference>
<dbReference type="PANTHER" id="PTHR30050:SF2">
    <property type="entry name" value="CHROMOSOMAL REPLICATION INITIATOR PROTEIN DNAA"/>
    <property type="match status" value="1"/>
</dbReference>
<dbReference type="Pfam" id="PF00308">
    <property type="entry name" value="Bac_DnaA"/>
    <property type="match status" value="1"/>
</dbReference>
<dbReference type="Pfam" id="PF08299">
    <property type="entry name" value="Bac_DnaA_C"/>
    <property type="match status" value="1"/>
</dbReference>
<dbReference type="Pfam" id="PF11638">
    <property type="entry name" value="DnaA_N"/>
    <property type="match status" value="1"/>
</dbReference>
<dbReference type="PRINTS" id="PR00051">
    <property type="entry name" value="DNAA"/>
</dbReference>
<dbReference type="SMART" id="SM00382">
    <property type="entry name" value="AAA"/>
    <property type="match status" value="1"/>
</dbReference>
<dbReference type="SMART" id="SM00760">
    <property type="entry name" value="Bac_DnaA_C"/>
    <property type="match status" value="1"/>
</dbReference>
<dbReference type="SUPFAM" id="SSF52540">
    <property type="entry name" value="P-loop containing nucleoside triphosphate hydrolases"/>
    <property type="match status" value="1"/>
</dbReference>
<dbReference type="SUPFAM" id="SSF48295">
    <property type="entry name" value="TrpR-like"/>
    <property type="match status" value="1"/>
</dbReference>
<dbReference type="PROSITE" id="PS01008">
    <property type="entry name" value="DNAA"/>
    <property type="match status" value="1"/>
</dbReference>
<reference key="1">
    <citation type="journal article" date="1989" name="Mol. Gen. Genet.">
        <title>Structure of the dnaA region of Pseudomonas putida: conservation among three bacteria, Bacillus subtilis, Escherichia coli and P. putida.</title>
        <authorList>
            <person name="Fujita M.Q."/>
            <person name="Yoshikawa H."/>
            <person name="Ogasawara N."/>
        </authorList>
    </citation>
    <scope>NUCLEOTIDE SEQUENCE [GENOMIC DNA]</scope>
    <source>
        <strain>TN2100</strain>
    </source>
</reference>
<reference key="2">
    <citation type="journal article" date="1992" name="Mol. Gen. Genet.">
        <title>Expression and regulation of a dnaA homologue isolated from Pseudomonas putida.</title>
        <authorList>
            <person name="Ingmer H."/>
            <person name="Atlung T."/>
        </authorList>
    </citation>
    <scope>NUCLEOTIDE SEQUENCE [GENOMIC DNA] OF 1-26</scope>
</reference>
<reference key="3">
    <citation type="journal article" date="1990" name="Proc. Natl. Acad. Sci. U.S.A.">
        <title>Pseudomonas chromosomal replication origins: a bacterial class distinct from Escherichia coli-type origins.</title>
        <authorList>
            <person name="Yee T.W."/>
            <person name="Smith D.W."/>
        </authorList>
    </citation>
    <scope>NUCLEOTIDE SEQUENCE [GENOMIC DNA] OF 1-7</scope>
</reference>
<organism>
    <name type="scientific">Pseudomonas putida</name>
    <name type="common">Arthrobacter siderocapsulatus</name>
    <dbReference type="NCBI Taxonomy" id="303"/>
    <lineage>
        <taxon>Bacteria</taxon>
        <taxon>Pseudomonadati</taxon>
        <taxon>Pseudomonadota</taxon>
        <taxon>Gammaproteobacteria</taxon>
        <taxon>Pseudomonadales</taxon>
        <taxon>Pseudomonadaceae</taxon>
        <taxon>Pseudomonas</taxon>
    </lineage>
</organism>
<comment type="function">
    <text evidence="1">Plays an essential role in the initiation and regulation of chromosomal replication. ATP-DnaA binds to the origin of replication (oriC) to initiate formation of the DNA replication initiation complex once per cell cycle. Binds the DnaA box (a 9 base pair repeat at the origin) and separates the double-stranded (ds)DNA. Forms a right-handed helical filament on oriC DNA; dsDNA binds to the exterior of the filament while single-stranded (ss)DNA is stabiized in the filament's interior. The ATP-DnaA-oriC complex binds and stabilizes one strand of the AT-rich DNA unwinding element (DUE), permitting loading of DNA polymerase. After initiation quickly degrades to an ADP-DnaA complex that is not apt for DNA replication. Binds acidic phospholipids.</text>
</comment>
<comment type="subunit">
    <text evidence="1">Oligomerizes as a right-handed, spiral filament on DNA at oriC.</text>
</comment>
<comment type="subcellular location">
    <subcellularLocation>
        <location evidence="1">Cytoplasm</location>
    </subcellularLocation>
</comment>
<comment type="domain">
    <text evidence="1">Domain I is involved in oligomerization and binding regulators, domain II is flexibile and of varying length in different bacteria, domain III forms the AAA+ region, while domain IV binds dsDNA.</text>
</comment>
<comment type="similarity">
    <text evidence="1">Belongs to the DnaA family.</text>
</comment>
<protein>
    <recommendedName>
        <fullName evidence="1">Chromosomal replication initiator protein DnaA</fullName>
    </recommendedName>
</protein>
<keyword id="KW-0067">ATP-binding</keyword>
<keyword id="KW-0963">Cytoplasm</keyword>
<keyword id="KW-0235">DNA replication</keyword>
<keyword id="KW-0238">DNA-binding</keyword>
<keyword id="KW-0446">Lipid-binding</keyword>
<keyword id="KW-0547">Nucleotide-binding</keyword>